<dbReference type="EC" id="3.4.11.4" evidence="1"/>
<dbReference type="EMBL" id="CP000857">
    <property type="protein sequence ID" value="ACN46622.1"/>
    <property type="molecule type" value="Genomic_DNA"/>
</dbReference>
<dbReference type="RefSeq" id="WP_000359420.1">
    <property type="nucleotide sequence ID" value="NC_012125.1"/>
</dbReference>
<dbReference type="SMR" id="C0Q764"/>
<dbReference type="MEROPS" id="M20.003"/>
<dbReference type="KEGG" id="sei:SPC_2517"/>
<dbReference type="HOGENOM" id="CLU_053676_0_0_6"/>
<dbReference type="Proteomes" id="UP000001599">
    <property type="component" value="Chromosome"/>
</dbReference>
<dbReference type="GO" id="GO:0005829">
    <property type="term" value="C:cytosol"/>
    <property type="evidence" value="ECO:0007669"/>
    <property type="project" value="TreeGrafter"/>
</dbReference>
<dbReference type="GO" id="GO:0008237">
    <property type="term" value="F:metallopeptidase activity"/>
    <property type="evidence" value="ECO:0007669"/>
    <property type="project" value="UniProtKB-KW"/>
</dbReference>
<dbReference type="GO" id="GO:0045148">
    <property type="term" value="F:tripeptide aminopeptidase activity"/>
    <property type="evidence" value="ECO:0007669"/>
    <property type="project" value="UniProtKB-UniRule"/>
</dbReference>
<dbReference type="GO" id="GO:0008270">
    <property type="term" value="F:zinc ion binding"/>
    <property type="evidence" value="ECO:0007669"/>
    <property type="project" value="UniProtKB-UniRule"/>
</dbReference>
<dbReference type="GO" id="GO:0043171">
    <property type="term" value="P:peptide catabolic process"/>
    <property type="evidence" value="ECO:0007669"/>
    <property type="project" value="UniProtKB-UniRule"/>
</dbReference>
<dbReference type="GO" id="GO:0006508">
    <property type="term" value="P:proteolysis"/>
    <property type="evidence" value="ECO:0007669"/>
    <property type="project" value="UniProtKB-UniRule"/>
</dbReference>
<dbReference type="CDD" id="cd03892">
    <property type="entry name" value="M20_peptT"/>
    <property type="match status" value="1"/>
</dbReference>
<dbReference type="FunFam" id="3.30.70.360:FF:000002">
    <property type="entry name" value="Peptidase T"/>
    <property type="match status" value="1"/>
</dbReference>
<dbReference type="Gene3D" id="3.30.70.360">
    <property type="match status" value="1"/>
</dbReference>
<dbReference type="Gene3D" id="3.40.630.10">
    <property type="entry name" value="Zn peptidases"/>
    <property type="match status" value="1"/>
</dbReference>
<dbReference type="HAMAP" id="MF_00550">
    <property type="entry name" value="Aminopeptidase_M20"/>
    <property type="match status" value="1"/>
</dbReference>
<dbReference type="InterPro" id="IPR001261">
    <property type="entry name" value="ArgE/DapE_CS"/>
</dbReference>
<dbReference type="InterPro" id="IPR036264">
    <property type="entry name" value="Bact_exopeptidase_dim_dom"/>
</dbReference>
<dbReference type="InterPro" id="IPR002933">
    <property type="entry name" value="Peptidase_M20"/>
</dbReference>
<dbReference type="InterPro" id="IPR011650">
    <property type="entry name" value="Peptidase_M20_dimer"/>
</dbReference>
<dbReference type="InterPro" id="IPR010161">
    <property type="entry name" value="Peptidase_M20B"/>
</dbReference>
<dbReference type="NCBIfam" id="TIGR01882">
    <property type="entry name" value="peptidase-T"/>
    <property type="match status" value="1"/>
</dbReference>
<dbReference type="NCBIfam" id="NF003976">
    <property type="entry name" value="PRK05469.1"/>
    <property type="match status" value="1"/>
</dbReference>
<dbReference type="NCBIfam" id="NF009920">
    <property type="entry name" value="PRK13381.1"/>
    <property type="match status" value="1"/>
</dbReference>
<dbReference type="PANTHER" id="PTHR42994">
    <property type="entry name" value="PEPTIDASE T"/>
    <property type="match status" value="1"/>
</dbReference>
<dbReference type="PANTHER" id="PTHR42994:SF1">
    <property type="entry name" value="PEPTIDASE T"/>
    <property type="match status" value="1"/>
</dbReference>
<dbReference type="Pfam" id="PF07687">
    <property type="entry name" value="M20_dimer"/>
    <property type="match status" value="1"/>
</dbReference>
<dbReference type="Pfam" id="PF01546">
    <property type="entry name" value="Peptidase_M20"/>
    <property type="match status" value="1"/>
</dbReference>
<dbReference type="PIRSF" id="PIRSF037215">
    <property type="entry name" value="Peptidase_M20B"/>
    <property type="match status" value="1"/>
</dbReference>
<dbReference type="SUPFAM" id="SSF55031">
    <property type="entry name" value="Bacterial exopeptidase dimerisation domain"/>
    <property type="match status" value="1"/>
</dbReference>
<dbReference type="SUPFAM" id="SSF53187">
    <property type="entry name" value="Zn-dependent exopeptidases"/>
    <property type="match status" value="1"/>
</dbReference>
<dbReference type="PROSITE" id="PS00758">
    <property type="entry name" value="ARGE_DAPE_CPG2_1"/>
    <property type="match status" value="1"/>
</dbReference>
<dbReference type="PROSITE" id="PS00759">
    <property type="entry name" value="ARGE_DAPE_CPG2_2"/>
    <property type="match status" value="1"/>
</dbReference>
<comment type="function">
    <text evidence="1">Cleaves the N-terminal amino acid of tripeptides.</text>
</comment>
<comment type="catalytic activity">
    <reaction evidence="1">
        <text>Release of the N-terminal residue from a tripeptide.</text>
        <dbReference type="EC" id="3.4.11.4"/>
    </reaction>
</comment>
<comment type="cofactor">
    <cofactor evidence="1">
        <name>Zn(2+)</name>
        <dbReference type="ChEBI" id="CHEBI:29105"/>
    </cofactor>
    <text evidence="1">Binds 2 Zn(2+) ions per subunit.</text>
</comment>
<comment type="subcellular location">
    <subcellularLocation>
        <location evidence="1">Cytoplasm</location>
    </subcellularLocation>
</comment>
<comment type="similarity">
    <text evidence="1">Belongs to the peptidase M20B family.</text>
</comment>
<evidence type="ECO:0000255" key="1">
    <source>
        <dbReference type="HAMAP-Rule" id="MF_00550"/>
    </source>
</evidence>
<reference key="1">
    <citation type="journal article" date="2009" name="PLoS ONE">
        <title>Salmonella paratyphi C: genetic divergence from Salmonella choleraesuis and pathogenic convergence with Salmonella typhi.</title>
        <authorList>
            <person name="Liu W.-Q."/>
            <person name="Feng Y."/>
            <person name="Wang Y."/>
            <person name="Zou Q.-H."/>
            <person name="Chen F."/>
            <person name="Guo J.-T."/>
            <person name="Peng Y.-H."/>
            <person name="Jin Y."/>
            <person name="Li Y.-G."/>
            <person name="Hu S.-N."/>
            <person name="Johnston R.N."/>
            <person name="Liu G.-R."/>
            <person name="Liu S.-L."/>
        </authorList>
    </citation>
    <scope>NUCLEOTIDE SEQUENCE [LARGE SCALE GENOMIC DNA]</scope>
    <source>
        <strain>RKS4594</strain>
    </source>
</reference>
<protein>
    <recommendedName>
        <fullName evidence="1">Peptidase T</fullName>
        <ecNumber evidence="1">3.4.11.4</ecNumber>
    </recommendedName>
    <alternativeName>
        <fullName evidence="1">Aminotripeptidase</fullName>
        <shortName evidence="1">Tripeptidase</shortName>
    </alternativeName>
    <alternativeName>
        <fullName evidence="1">Tripeptide aminopeptidase</fullName>
    </alternativeName>
</protein>
<proteinExistence type="inferred from homology"/>
<accession>C0Q764</accession>
<gene>
    <name evidence="1" type="primary">pepT</name>
    <name type="ordered locus">SPC_2517</name>
</gene>
<name>PEPT_SALPC</name>
<organism>
    <name type="scientific">Salmonella paratyphi C (strain RKS4594)</name>
    <dbReference type="NCBI Taxonomy" id="476213"/>
    <lineage>
        <taxon>Bacteria</taxon>
        <taxon>Pseudomonadati</taxon>
        <taxon>Pseudomonadota</taxon>
        <taxon>Gammaproteobacteria</taxon>
        <taxon>Enterobacterales</taxon>
        <taxon>Enterobacteriaceae</taxon>
        <taxon>Salmonella</taxon>
    </lineage>
</organism>
<keyword id="KW-0031">Aminopeptidase</keyword>
<keyword id="KW-0963">Cytoplasm</keyword>
<keyword id="KW-0378">Hydrolase</keyword>
<keyword id="KW-0479">Metal-binding</keyword>
<keyword id="KW-0482">Metalloprotease</keyword>
<keyword id="KW-0645">Protease</keyword>
<keyword id="KW-0862">Zinc</keyword>
<sequence>MDKLLERFLHYVSLDTQSKSGVRQVPSTEGQWKLLRLLKQQLEEMGLVNITLSEKGTLMATLPANVEGDIPAIGFISHVDTSPDFSGKNVNPQIVENYRGGDIALGIGDEVLSPVMFPVLHQLLGQTLITTDGKTLLGADDKAGVAEIMTALAVLKGNPIPHGEINVAFTPDEEVGKGAKHFDVEAFGAQWAYTVDGGGVGELEFENFNAASVNIKIVGNNVHPGTAKGVMVNALSLAARIHAEVPADEAPETTEGYEGFYHLASMKGTVDRAEMHYIIRDFDRKQFEARKRKMMEIAKKVGKGLHPDCYIELVIEDSYYNMREKVVEHPHILDIAQQAMRDCHITPEMKPIRGGTDGVQLSFMGLPCPNLFTGGYNYHGKHEFVTLEGMEKAVQVIVRIAELTAKRGQ</sequence>
<feature type="chain" id="PRO_1000200892" description="Peptidase T">
    <location>
        <begin position="1"/>
        <end position="409"/>
    </location>
</feature>
<feature type="active site" evidence="1">
    <location>
        <position position="80"/>
    </location>
</feature>
<feature type="active site" description="Proton acceptor" evidence="1">
    <location>
        <position position="173"/>
    </location>
</feature>
<feature type="binding site" evidence="1">
    <location>
        <position position="78"/>
    </location>
    <ligand>
        <name>Zn(2+)</name>
        <dbReference type="ChEBI" id="CHEBI:29105"/>
        <label>1</label>
    </ligand>
</feature>
<feature type="binding site" evidence="1">
    <location>
        <position position="140"/>
    </location>
    <ligand>
        <name>Zn(2+)</name>
        <dbReference type="ChEBI" id="CHEBI:29105"/>
        <label>1</label>
    </ligand>
</feature>
<feature type="binding site" evidence="1">
    <location>
        <position position="140"/>
    </location>
    <ligand>
        <name>Zn(2+)</name>
        <dbReference type="ChEBI" id="CHEBI:29105"/>
        <label>2</label>
    </ligand>
</feature>
<feature type="binding site" evidence="1">
    <location>
        <position position="174"/>
    </location>
    <ligand>
        <name>Zn(2+)</name>
        <dbReference type="ChEBI" id="CHEBI:29105"/>
        <label>2</label>
    </ligand>
</feature>
<feature type="binding site" evidence="1">
    <location>
        <position position="196"/>
    </location>
    <ligand>
        <name>Zn(2+)</name>
        <dbReference type="ChEBI" id="CHEBI:29105"/>
        <label>1</label>
    </ligand>
</feature>
<feature type="binding site" evidence="1">
    <location>
        <position position="379"/>
    </location>
    <ligand>
        <name>Zn(2+)</name>
        <dbReference type="ChEBI" id="CHEBI:29105"/>
        <label>2</label>
    </ligand>
</feature>